<organism>
    <name type="scientific">Cereibacter sphaeroides</name>
    <name type="common">Rhodobacter sphaeroides</name>
    <dbReference type="NCBI Taxonomy" id="1063"/>
    <lineage>
        <taxon>Bacteria</taxon>
        <taxon>Pseudomonadati</taxon>
        <taxon>Pseudomonadota</taxon>
        <taxon>Alphaproteobacteria</taxon>
        <taxon>Rhodobacterales</taxon>
        <taxon>Paracoccaceae</taxon>
        <taxon>Cereibacter</taxon>
    </lineage>
</organism>
<comment type="function">
    <text>P-II indirectly controls the transcription of the glutamine synthetase gene (glnA). P-II prevents NR-II-catalyzed conversion of NR-I to NR-I-phosphate, the transcriptional activator of glnA. When P-II is uridylylated to P-II-UMP, these events are reversed. When the ratio of Gln to 2-ketoglutarate decreases, P-II is uridylylated to P-II-UMP, which causes the deadenylation of glutamine synthetase, so activating the enzyme.</text>
</comment>
<comment type="subunit">
    <text evidence="1">Homotrimer.</text>
</comment>
<comment type="similarity">
    <text evidence="2">Belongs to the P(II) protein family.</text>
</comment>
<accession>P43519</accession>
<protein>
    <recommendedName>
        <fullName>Nitrogen regulatory protein P-II</fullName>
    </recommendedName>
    <alternativeName>
        <fullName>PII signal transducing protein</fullName>
    </alternativeName>
</protein>
<proteinExistence type="inferred from homology"/>
<feature type="chain" id="PRO_0000139788" description="Nitrogen regulatory protein P-II">
    <location>
        <begin position="1"/>
        <end position="112"/>
    </location>
</feature>
<feature type="modified residue" description="O-UMP-tyrosine" evidence="2">
    <location>
        <position position="51"/>
    </location>
</feature>
<dbReference type="EMBL" id="X71659">
    <property type="protein sequence ID" value="CAA50650.1"/>
    <property type="molecule type" value="Genomic_DNA"/>
</dbReference>
<dbReference type="PIR" id="S33180">
    <property type="entry name" value="S33180"/>
</dbReference>
<dbReference type="SMR" id="P43519"/>
<dbReference type="GO" id="GO:0005829">
    <property type="term" value="C:cytosol"/>
    <property type="evidence" value="ECO:0007669"/>
    <property type="project" value="TreeGrafter"/>
</dbReference>
<dbReference type="GO" id="GO:0005524">
    <property type="term" value="F:ATP binding"/>
    <property type="evidence" value="ECO:0007669"/>
    <property type="project" value="TreeGrafter"/>
</dbReference>
<dbReference type="GO" id="GO:0030234">
    <property type="term" value="F:enzyme regulator activity"/>
    <property type="evidence" value="ECO:0007669"/>
    <property type="project" value="InterPro"/>
</dbReference>
<dbReference type="GO" id="GO:0009399">
    <property type="term" value="P:nitrogen fixation"/>
    <property type="evidence" value="ECO:0007669"/>
    <property type="project" value="UniProtKB-KW"/>
</dbReference>
<dbReference type="GO" id="GO:0006808">
    <property type="term" value="P:regulation of nitrogen utilization"/>
    <property type="evidence" value="ECO:0007669"/>
    <property type="project" value="InterPro"/>
</dbReference>
<dbReference type="FunFam" id="3.30.70.120:FF:000001">
    <property type="entry name" value="Nitrogen regulatory protein P-II"/>
    <property type="match status" value="1"/>
</dbReference>
<dbReference type="Gene3D" id="3.30.70.120">
    <property type="match status" value="1"/>
</dbReference>
<dbReference type="InterPro" id="IPR002187">
    <property type="entry name" value="N-reg_PII"/>
</dbReference>
<dbReference type="InterPro" id="IPR011322">
    <property type="entry name" value="N-reg_PII-like_a/b"/>
</dbReference>
<dbReference type="InterPro" id="IPR015867">
    <property type="entry name" value="N-reg_PII/ATP_PRibTrfase_C"/>
</dbReference>
<dbReference type="InterPro" id="IPR017918">
    <property type="entry name" value="N-reg_PII_CS"/>
</dbReference>
<dbReference type="InterPro" id="IPR002332">
    <property type="entry name" value="N-reg_PII_urydylation_site"/>
</dbReference>
<dbReference type="PANTHER" id="PTHR30115">
    <property type="entry name" value="NITROGEN REGULATORY PROTEIN P-II"/>
    <property type="match status" value="1"/>
</dbReference>
<dbReference type="PANTHER" id="PTHR30115:SF11">
    <property type="entry name" value="NITROGEN REGULATORY PROTEIN P-II HOMOLOG"/>
    <property type="match status" value="1"/>
</dbReference>
<dbReference type="Pfam" id="PF00543">
    <property type="entry name" value="P-II"/>
    <property type="match status" value="1"/>
</dbReference>
<dbReference type="PIRSF" id="PIRSF039144">
    <property type="entry name" value="GlnB"/>
    <property type="match status" value="1"/>
</dbReference>
<dbReference type="PRINTS" id="PR00340">
    <property type="entry name" value="PIIGLNB"/>
</dbReference>
<dbReference type="SMART" id="SM00938">
    <property type="entry name" value="P-II"/>
    <property type="match status" value="1"/>
</dbReference>
<dbReference type="SUPFAM" id="SSF54913">
    <property type="entry name" value="GlnB-like"/>
    <property type="match status" value="1"/>
</dbReference>
<dbReference type="PROSITE" id="PS00638">
    <property type="entry name" value="PII_GLNB_CTER"/>
    <property type="match status" value="1"/>
</dbReference>
<dbReference type="PROSITE" id="PS51343">
    <property type="entry name" value="PII_GLNB_DOM"/>
    <property type="match status" value="1"/>
</dbReference>
<dbReference type="PROSITE" id="PS00496">
    <property type="entry name" value="PII_GLNB_UMP"/>
    <property type="match status" value="1"/>
</dbReference>
<reference key="1">
    <citation type="journal article" date="1994" name="Microbiology">
        <title>Nucleotide sequence and characterization of the Rhodobacter sphaeroides glnB and glnA genes.</title>
        <authorList>
            <person name="Zinchenko V.V."/>
            <person name="Churin Y."/>
            <person name="Shestopalov V.I."/>
            <person name="Shestakov S.V."/>
        </authorList>
    </citation>
    <scope>NUCLEOTIDE SEQUENCE [GENOMIC DNA]</scope>
    <source>
        <strain>2R</strain>
    </source>
</reference>
<keyword id="KW-0535">Nitrogen fixation</keyword>
<keyword id="KW-0547">Nucleotide-binding</keyword>
<keyword id="KW-0597">Phosphoprotein</keyword>
<keyword id="KW-0804">Transcription</keyword>
<keyword id="KW-0805">Transcription regulation</keyword>
<gene>
    <name type="primary">glnB</name>
</gene>
<sequence length="112" mass="12100">MKKIEAIIKPFKLDEVKEALQAAGVQGLSVTEVKGFGRQKGHTELYRGAAYVVDFLPKVKIEVVLADDMVEAAVEAIVSASRTDKIGDGKIFISPVEQAIRIRTGETGEDAV</sequence>
<evidence type="ECO:0000250" key="1"/>
<evidence type="ECO:0000255" key="2">
    <source>
        <dbReference type="PROSITE-ProRule" id="PRU00675"/>
    </source>
</evidence>
<name>GLNB_CERSP</name>